<protein>
    <recommendedName>
        <fullName>Cytochrome b-c1 complex subunit 8-1, mitochondrial</fullName>
    </recommendedName>
    <alternativeName>
        <fullName>Complex III subunit 8-1</fullName>
    </alternativeName>
    <alternativeName>
        <fullName>Complex III subunit VIII</fullName>
    </alternativeName>
    <alternativeName>
        <fullName>Ubiquinol-cytochrome c oxidoreductase subunit 8-1</fullName>
    </alternativeName>
    <alternativeName>
        <fullName>Ubiquinol-cytochrome c reductase complex ubiquinone-binding protein QP-C</fullName>
    </alternativeName>
</protein>
<proteinExistence type="evidence at protein level"/>
<evidence type="ECO:0000250" key="1">
    <source>
        <dbReference type="UniProtKB" id="P08525"/>
    </source>
</evidence>
<evidence type="ECO:0000255" key="2"/>
<evidence type="ECO:0000269" key="3">
    <source>
    </source>
</evidence>
<evidence type="ECO:0000269" key="4">
    <source>
    </source>
</evidence>
<evidence type="ECO:0000305" key="5"/>
<evidence type="ECO:0000312" key="6">
    <source>
        <dbReference type="Araport" id="AT3G10860"/>
    </source>
</evidence>
<evidence type="ECO:0000312" key="7">
    <source>
        <dbReference type="EMBL" id="AAF19563.1"/>
    </source>
</evidence>
<evidence type="ECO:0007829" key="8">
    <source>
        <dbReference type="PDB" id="8BEL"/>
    </source>
</evidence>
<feature type="chain" id="PRO_0000449254" description="Cytochrome b-c1 complex subunit 8-1, mitochondrial">
    <location>
        <begin position="1"/>
        <end position="72"/>
    </location>
</feature>
<feature type="topological domain" description="Mitochondrial matrix" evidence="1">
    <location>
        <begin position="1"/>
        <end position="41"/>
    </location>
</feature>
<feature type="transmembrane region" description="Helical" evidence="2">
    <location>
        <begin position="42"/>
        <end position="58"/>
    </location>
</feature>
<feature type="topological domain" description="Mitochondrial intermembrane" evidence="1">
    <location>
        <begin position="59"/>
        <end position="72"/>
    </location>
</feature>
<feature type="strand" evidence="8">
    <location>
        <begin position="11"/>
        <end position="13"/>
    </location>
</feature>
<feature type="helix" evidence="8">
    <location>
        <begin position="17"/>
        <end position="19"/>
    </location>
</feature>
<feature type="helix" evidence="8">
    <location>
        <begin position="24"/>
        <end position="27"/>
    </location>
</feature>
<feature type="helix" evidence="8">
    <location>
        <begin position="30"/>
        <end position="69"/>
    </location>
</feature>
<reference key="1">
    <citation type="journal article" date="2000" name="Nature">
        <title>Sequence and analysis of chromosome 3 of the plant Arabidopsis thaliana.</title>
        <authorList>
            <person name="Salanoubat M."/>
            <person name="Lemcke K."/>
            <person name="Rieger M."/>
            <person name="Ansorge W."/>
            <person name="Unseld M."/>
            <person name="Fartmann B."/>
            <person name="Valle G."/>
            <person name="Bloecker H."/>
            <person name="Perez-Alonso M."/>
            <person name="Obermaier B."/>
            <person name="Delseny M."/>
            <person name="Boutry M."/>
            <person name="Grivell L.A."/>
            <person name="Mache R."/>
            <person name="Puigdomenech P."/>
            <person name="De Simone V."/>
            <person name="Choisne N."/>
            <person name="Artiguenave F."/>
            <person name="Robert C."/>
            <person name="Brottier P."/>
            <person name="Wincker P."/>
            <person name="Cattolico L."/>
            <person name="Weissenbach J."/>
            <person name="Saurin W."/>
            <person name="Quetier F."/>
            <person name="Schaefer M."/>
            <person name="Mueller-Auer S."/>
            <person name="Gabel C."/>
            <person name="Fuchs M."/>
            <person name="Benes V."/>
            <person name="Wurmbach E."/>
            <person name="Drzonek H."/>
            <person name="Erfle H."/>
            <person name="Jordan N."/>
            <person name="Bangert S."/>
            <person name="Wiedelmann R."/>
            <person name="Kranz H."/>
            <person name="Voss H."/>
            <person name="Holland R."/>
            <person name="Brandt P."/>
            <person name="Nyakatura G."/>
            <person name="Vezzi A."/>
            <person name="D'Angelo M."/>
            <person name="Pallavicini A."/>
            <person name="Toppo S."/>
            <person name="Simionati B."/>
            <person name="Conrad A."/>
            <person name="Hornischer K."/>
            <person name="Kauer G."/>
            <person name="Loehnert T.-H."/>
            <person name="Nordsiek G."/>
            <person name="Reichelt J."/>
            <person name="Scharfe M."/>
            <person name="Schoen O."/>
            <person name="Bargues M."/>
            <person name="Terol J."/>
            <person name="Climent J."/>
            <person name="Navarro P."/>
            <person name="Collado C."/>
            <person name="Perez-Perez A."/>
            <person name="Ottenwaelder B."/>
            <person name="Duchemin D."/>
            <person name="Cooke R."/>
            <person name="Laudie M."/>
            <person name="Berger-Llauro C."/>
            <person name="Purnelle B."/>
            <person name="Masuy D."/>
            <person name="de Haan M."/>
            <person name="Maarse A.C."/>
            <person name="Alcaraz J.-P."/>
            <person name="Cottet A."/>
            <person name="Casacuberta E."/>
            <person name="Monfort A."/>
            <person name="Argiriou A."/>
            <person name="Flores M."/>
            <person name="Liguori R."/>
            <person name="Vitale D."/>
            <person name="Mannhaupt G."/>
            <person name="Haase D."/>
            <person name="Schoof H."/>
            <person name="Rudd S."/>
            <person name="Zaccaria P."/>
            <person name="Mewes H.-W."/>
            <person name="Mayer K.F.X."/>
            <person name="Kaul S."/>
            <person name="Town C.D."/>
            <person name="Koo H.L."/>
            <person name="Tallon L.J."/>
            <person name="Jenkins J."/>
            <person name="Rooney T."/>
            <person name="Rizzo M."/>
            <person name="Walts A."/>
            <person name="Utterback T."/>
            <person name="Fujii C.Y."/>
            <person name="Shea T.P."/>
            <person name="Creasy T.H."/>
            <person name="Haas B."/>
            <person name="Maiti R."/>
            <person name="Wu D."/>
            <person name="Peterson J."/>
            <person name="Van Aken S."/>
            <person name="Pai G."/>
            <person name="Militscher J."/>
            <person name="Sellers P."/>
            <person name="Gill J.E."/>
            <person name="Feldblyum T.V."/>
            <person name="Preuss D."/>
            <person name="Lin X."/>
            <person name="Nierman W.C."/>
            <person name="Salzberg S.L."/>
            <person name="White O."/>
            <person name="Venter J.C."/>
            <person name="Fraser C.M."/>
            <person name="Kaneko T."/>
            <person name="Nakamura Y."/>
            <person name="Sato S."/>
            <person name="Kato T."/>
            <person name="Asamizu E."/>
            <person name="Sasamoto S."/>
            <person name="Kimura T."/>
            <person name="Idesawa K."/>
            <person name="Kawashima K."/>
            <person name="Kishida Y."/>
            <person name="Kiyokawa C."/>
            <person name="Kohara M."/>
            <person name="Matsumoto M."/>
            <person name="Matsuno A."/>
            <person name="Muraki A."/>
            <person name="Nakayama S."/>
            <person name="Nakazaki N."/>
            <person name="Shinpo S."/>
            <person name="Takeuchi C."/>
            <person name="Wada T."/>
            <person name="Watanabe A."/>
            <person name="Yamada M."/>
            <person name="Yasuda M."/>
            <person name="Tabata S."/>
        </authorList>
    </citation>
    <scope>NUCLEOTIDE SEQUENCE [LARGE SCALE GENOMIC DNA]</scope>
    <source>
        <strain>cv. Columbia</strain>
    </source>
</reference>
<reference key="2">
    <citation type="journal article" date="2017" name="Plant J.">
        <title>Araport11: a complete reannotation of the Arabidopsis thaliana reference genome.</title>
        <authorList>
            <person name="Cheng C.Y."/>
            <person name="Krishnakumar V."/>
            <person name="Chan A.P."/>
            <person name="Thibaud-Nissen F."/>
            <person name="Schobel S."/>
            <person name="Town C.D."/>
        </authorList>
    </citation>
    <scope>GENOME REANNOTATION</scope>
    <source>
        <strain>cv. Columbia</strain>
    </source>
</reference>
<reference key="3">
    <citation type="journal article" date="2003" name="Science">
        <title>Empirical analysis of transcriptional activity in the Arabidopsis genome.</title>
        <authorList>
            <person name="Yamada K."/>
            <person name="Lim J."/>
            <person name="Dale J.M."/>
            <person name="Chen H."/>
            <person name="Shinn P."/>
            <person name="Palm C.J."/>
            <person name="Southwick A.M."/>
            <person name="Wu H.C."/>
            <person name="Kim C.J."/>
            <person name="Nguyen M."/>
            <person name="Pham P.K."/>
            <person name="Cheuk R.F."/>
            <person name="Karlin-Newmann G."/>
            <person name="Liu S.X."/>
            <person name="Lam B."/>
            <person name="Sakano H."/>
            <person name="Wu T."/>
            <person name="Yu G."/>
            <person name="Miranda M."/>
            <person name="Quach H.L."/>
            <person name="Tripp M."/>
            <person name="Chang C.H."/>
            <person name="Lee J.M."/>
            <person name="Toriumi M.J."/>
            <person name="Chan M.M."/>
            <person name="Tang C.C."/>
            <person name="Onodera C.S."/>
            <person name="Deng J.M."/>
            <person name="Akiyama K."/>
            <person name="Ansari Y."/>
            <person name="Arakawa T."/>
            <person name="Banh J."/>
            <person name="Banno F."/>
            <person name="Bowser L."/>
            <person name="Brooks S.Y."/>
            <person name="Carninci P."/>
            <person name="Chao Q."/>
            <person name="Choy N."/>
            <person name="Enju A."/>
            <person name="Goldsmith A.D."/>
            <person name="Gurjal M."/>
            <person name="Hansen N.F."/>
            <person name="Hayashizaki Y."/>
            <person name="Johnson-Hopson C."/>
            <person name="Hsuan V.W."/>
            <person name="Iida K."/>
            <person name="Karnes M."/>
            <person name="Khan S."/>
            <person name="Koesema E."/>
            <person name="Ishida J."/>
            <person name="Jiang P.X."/>
            <person name="Jones T."/>
            <person name="Kawai J."/>
            <person name="Kamiya A."/>
            <person name="Meyers C."/>
            <person name="Nakajima M."/>
            <person name="Narusaka M."/>
            <person name="Seki M."/>
            <person name="Sakurai T."/>
            <person name="Satou M."/>
            <person name="Tamse R."/>
            <person name="Vaysberg M."/>
            <person name="Wallender E.K."/>
            <person name="Wong C."/>
            <person name="Yamamura Y."/>
            <person name="Yuan S."/>
            <person name="Shinozaki K."/>
            <person name="Davis R.W."/>
            <person name="Theologis A."/>
            <person name="Ecker J.R."/>
        </authorList>
    </citation>
    <scope>NUCLEOTIDE SEQUENCE [LARGE SCALE MRNA]</scope>
    <source>
        <strain>cv. Columbia</strain>
    </source>
</reference>
<reference key="4">
    <citation type="submission" date="2002-03" db="EMBL/GenBank/DDBJ databases">
        <title>Full-length cDNA from Arabidopsis thaliana.</title>
        <authorList>
            <person name="Brover V.V."/>
            <person name="Troukhan M.E."/>
            <person name="Alexandrov N.A."/>
            <person name="Lu Y.-P."/>
            <person name="Flavell R.B."/>
            <person name="Feldmann K.A."/>
        </authorList>
    </citation>
    <scope>NUCLEOTIDE SEQUENCE [LARGE SCALE MRNA]</scope>
</reference>
<reference key="5">
    <citation type="journal article" date="2003" name="Plant Physiol.">
        <title>New insights into the respiratory chain of plant mitochondria. Supercomplexes and a unique composition of complex II.</title>
        <authorList>
            <person name="Eubel H."/>
            <person name="Jansch L."/>
            <person name="Braun H.P."/>
        </authorList>
    </citation>
    <scope>SUBUNIT</scope>
</reference>
<reference key="6">
    <citation type="journal article" date="2008" name="J. Proteome Res.">
        <title>Resolving and identifying protein components of plant mitochondrial respiratory complexes using three dimensions of gel electrophoresis.</title>
        <authorList>
            <person name="Meyer E.H."/>
            <person name="Taylor N.L."/>
            <person name="Millar A.H."/>
        </authorList>
    </citation>
    <scope>SUBCELLULAR LOCATION</scope>
    <scope>SUBUNIT</scope>
    <scope>IDENTIFICATION BY MASS SPECTROMETRY</scope>
</reference>
<name>UCRQ1_ARATH</name>
<dbReference type="EMBL" id="AC011708">
    <property type="protein sequence ID" value="AAF19563.1"/>
    <property type="molecule type" value="Genomic_DNA"/>
</dbReference>
<dbReference type="EMBL" id="CP002686">
    <property type="protein sequence ID" value="AEE74964.1"/>
    <property type="molecule type" value="Genomic_DNA"/>
</dbReference>
<dbReference type="EMBL" id="CP002686">
    <property type="protein sequence ID" value="ANM65253.1"/>
    <property type="molecule type" value="Genomic_DNA"/>
</dbReference>
<dbReference type="EMBL" id="BT000474">
    <property type="protein sequence ID" value="AAN17451.1"/>
    <property type="molecule type" value="mRNA"/>
</dbReference>
<dbReference type="EMBL" id="BT006507">
    <property type="protein sequence ID" value="AAP21315.1"/>
    <property type="molecule type" value="mRNA"/>
</dbReference>
<dbReference type="EMBL" id="AY086370">
    <property type="protein sequence ID" value="AAM64437.1"/>
    <property type="molecule type" value="mRNA"/>
</dbReference>
<dbReference type="RefSeq" id="NP_001327236.1">
    <property type="nucleotide sequence ID" value="NM_001337900.1"/>
</dbReference>
<dbReference type="RefSeq" id="NP_187697.1">
    <property type="nucleotide sequence ID" value="NM_111923.5"/>
</dbReference>
<dbReference type="PDB" id="8BEL">
    <property type="method" value="EM"/>
    <property type="resolution" value="2.25 A"/>
    <property type="chains" value="G/Q=1-72"/>
</dbReference>
<dbReference type="PDB" id="8BPX">
    <property type="method" value="EM"/>
    <property type="resolution" value="2.09 A"/>
    <property type="chains" value="AG/BG=1-72"/>
</dbReference>
<dbReference type="PDB" id="8BQ5">
    <property type="method" value="EM"/>
    <property type="resolution" value="2.73 A"/>
    <property type="chains" value="AG/BG=1-72"/>
</dbReference>
<dbReference type="PDB" id="8BQ6">
    <property type="method" value="EM"/>
    <property type="resolution" value="2.80 A"/>
    <property type="chains" value="AG/BG=1-72"/>
</dbReference>
<dbReference type="PDBsum" id="8BEL"/>
<dbReference type="PDBsum" id="8BPX"/>
<dbReference type="PDBsum" id="8BQ5"/>
<dbReference type="PDBsum" id="8BQ6"/>
<dbReference type="EMDB" id="EMD-16007"/>
<dbReference type="EMDB" id="EMD-16168"/>
<dbReference type="EMDB" id="EMD-16171"/>
<dbReference type="EMDB" id="EMD-16172"/>
<dbReference type="SMR" id="Q9SG91"/>
<dbReference type="FunCoup" id="Q9SG91">
    <property type="interactions" value="1299"/>
</dbReference>
<dbReference type="IntAct" id="Q9SG91">
    <property type="interactions" value="1"/>
</dbReference>
<dbReference type="STRING" id="3702.Q9SG91"/>
<dbReference type="PaxDb" id="3702-AT3G10860.1"/>
<dbReference type="ProteomicsDB" id="179648"/>
<dbReference type="DNASU" id="820256"/>
<dbReference type="EnsemblPlants" id="AT3G10860.1">
    <property type="protein sequence ID" value="AT3G10860.1"/>
    <property type="gene ID" value="AT3G10860"/>
</dbReference>
<dbReference type="EnsemblPlants" id="AT3G10860.2">
    <property type="protein sequence ID" value="AT3G10860.2"/>
    <property type="gene ID" value="AT3G10860"/>
</dbReference>
<dbReference type="GeneID" id="820256"/>
<dbReference type="Gramene" id="AT3G10860.1">
    <property type="protein sequence ID" value="AT3G10860.1"/>
    <property type="gene ID" value="AT3G10860"/>
</dbReference>
<dbReference type="Gramene" id="AT3G10860.2">
    <property type="protein sequence ID" value="AT3G10860.2"/>
    <property type="gene ID" value="AT3G10860"/>
</dbReference>
<dbReference type="KEGG" id="ath:AT3G10860"/>
<dbReference type="Araport" id="AT3G10860"/>
<dbReference type="TAIR" id="AT3G10860"/>
<dbReference type="eggNOG" id="ENOG502S4G5">
    <property type="taxonomic scope" value="Eukaryota"/>
</dbReference>
<dbReference type="HOGENOM" id="CLU_202122_0_0_1"/>
<dbReference type="InParanoid" id="Q9SG91"/>
<dbReference type="OMA" id="TYWYAQY"/>
<dbReference type="OrthoDB" id="1841852at2759"/>
<dbReference type="PhylomeDB" id="Q9SG91"/>
<dbReference type="BioCyc" id="ARA:MONOMERQT-2773"/>
<dbReference type="BioCyc" id="MetaCyc:MONOMERQT-2773"/>
<dbReference type="PRO" id="PR:Q9SG91"/>
<dbReference type="Proteomes" id="UP000006548">
    <property type="component" value="Chromosome 3"/>
</dbReference>
<dbReference type="ExpressionAtlas" id="Q9SG91">
    <property type="expression patterns" value="baseline and differential"/>
</dbReference>
<dbReference type="GO" id="GO:0005829">
    <property type="term" value="C:cytosol"/>
    <property type="evidence" value="ECO:0007005"/>
    <property type="project" value="TAIR"/>
</dbReference>
<dbReference type="GO" id="GO:0005743">
    <property type="term" value="C:mitochondrial inner membrane"/>
    <property type="evidence" value="ECO:0007669"/>
    <property type="project" value="UniProtKB-SubCell"/>
</dbReference>
<dbReference type="GO" id="GO:0005739">
    <property type="term" value="C:mitochondrion"/>
    <property type="evidence" value="ECO:0007005"/>
    <property type="project" value="TAIR"/>
</dbReference>
<dbReference type="GO" id="GO:0045275">
    <property type="term" value="C:respiratory chain complex III"/>
    <property type="evidence" value="ECO:0007669"/>
    <property type="project" value="InterPro"/>
</dbReference>
<dbReference type="GO" id="GO:0006122">
    <property type="term" value="P:mitochondrial electron transport, ubiquinol to cytochrome c"/>
    <property type="evidence" value="ECO:0007669"/>
    <property type="project" value="InterPro"/>
</dbReference>
<dbReference type="FunFam" id="1.20.5.210:FF:000002">
    <property type="entry name" value="BnaA01g31400D protein"/>
    <property type="match status" value="1"/>
</dbReference>
<dbReference type="Gene3D" id="1.20.5.210">
    <property type="entry name" value="Cytochrome b-c1 complex subunit 8"/>
    <property type="match status" value="1"/>
</dbReference>
<dbReference type="InterPro" id="IPR020101">
    <property type="entry name" value="Cyt_b-c1_8-plants"/>
</dbReference>
<dbReference type="InterPro" id="IPR036642">
    <property type="entry name" value="Cyt_bc1_su8_sf"/>
</dbReference>
<dbReference type="PANTHER" id="PTHR34559">
    <property type="entry name" value="CYTOCHROME B-C1 COMPLEX SUBUNIT 8"/>
    <property type="match status" value="1"/>
</dbReference>
<dbReference type="PANTHER" id="PTHR34559:SF6">
    <property type="entry name" value="CYTOCHROME B-C1 COMPLEX SUBUNIT 8-1, MITOCHONDRIAL"/>
    <property type="match status" value="1"/>
</dbReference>
<dbReference type="Pfam" id="PF10890">
    <property type="entry name" value="Cyt_b-c1_8"/>
    <property type="match status" value="1"/>
</dbReference>
<dbReference type="SUPFAM" id="SSF81508">
    <property type="entry name" value="Ubiquinone-binding protein QP-C of cytochrome bc1 complex (Ubiquinol-cytochrome c reductase)"/>
    <property type="match status" value="1"/>
</dbReference>
<sequence length="72" mass="8505">MGKQPVKLKAVVYALSPFQQKIMTGLWKDLPEKIHHKVSENWISATLLVTPVVGTYWYAQYFKEQEKLEHRF</sequence>
<accession>Q9SG91</accession>
<accession>A0A178VJR6</accession>
<gene>
    <name type="primary">UCRQ-1</name>
    <name evidence="6" type="ordered locus">At3g10860</name>
    <name evidence="7" type="ORF">T7M13.6</name>
</gene>
<organism>
    <name type="scientific">Arabidopsis thaliana</name>
    <name type="common">Mouse-ear cress</name>
    <dbReference type="NCBI Taxonomy" id="3702"/>
    <lineage>
        <taxon>Eukaryota</taxon>
        <taxon>Viridiplantae</taxon>
        <taxon>Streptophyta</taxon>
        <taxon>Embryophyta</taxon>
        <taxon>Tracheophyta</taxon>
        <taxon>Spermatophyta</taxon>
        <taxon>Magnoliopsida</taxon>
        <taxon>eudicotyledons</taxon>
        <taxon>Gunneridae</taxon>
        <taxon>Pentapetalae</taxon>
        <taxon>rosids</taxon>
        <taxon>malvids</taxon>
        <taxon>Brassicales</taxon>
        <taxon>Brassicaceae</taxon>
        <taxon>Camelineae</taxon>
        <taxon>Arabidopsis</taxon>
    </lineage>
</organism>
<comment type="function">
    <text evidence="1">Component of the ubiquinol-cytochrome c oxidoreductase, a multisubunit transmembrane complex that is part of the mitochondrial electron transport chain which drives oxidative phosphorylation. The respiratory chain contains 3 multisubunit complexes succinate dehydrogenase (complex II, CII), ubiquinol-cytochrome c oxidoreductase (cytochrome b-c1 complex, complex III, CIII) and cytochrome c oxidase (complex IV, CIV), that cooperate to transfer electrons derived from NADH and succinate to molecular oxygen, creating an electrochemical gradient over the inner membrane that drives transmembrane transport and the ATP synthase. The cytochrome b-c1 complex catalyzes electron transfer from ubiquinol to cytochrome c, linking this redox reaction to translocation of protons across the mitochondrial inner membrane, with protons being carried across the membrane as hydrogens on the quinol. In the process called Q cycle, 2 protons are consumed from the matrix, 4 protons are released into the intermembrane space and 2 electrons are passed to cytochrome c.</text>
</comment>
<comment type="subunit">
    <text evidence="3 4">Component of the ubiquinol-cytochrome c oxidoreductase (cytochrome b-c1 complex, complex III, CIII), a multisubunit enzyme composed of 10 subunits. The complex is composed of 3 respiratory subunits cytochrome b (MT-CYB), cytochrome c1 (CYC1-1 or CYC1-2) and Rieske protein (UCR1-1 or UCR1-2), 2 core protein subunits MPPalpha1 (or MPPalpha2) and MPPB, and 5 low-molecular weight protein subunits QCR7-1 (or QCR7-2), UCRQ-1 (or UCRQ-2), QCR9, UCRY and probably QCR6-1 (or QCR6-2) (PubMed:18189341). The complex exists as an obligatory dimer and forms supercomplexes (SCs) in the inner mitochondrial membrane with NADH-ubiquinone oxidoreductase (complex I, CI), resulting in different assemblies (supercomplexes SCI(1)III(2) and SCI(2)III(4)) (PubMed:12970493).</text>
</comment>
<comment type="subcellular location">
    <subcellularLocation>
        <location evidence="1">Mitochondrion inner membrane</location>
        <topology evidence="1">Single-pass membrane protein</topology>
    </subcellularLocation>
</comment>
<comment type="similarity">
    <text evidence="5">Belongs to the UQCRQ/QCR8 family.</text>
</comment>
<keyword id="KW-0002">3D-structure</keyword>
<keyword id="KW-0249">Electron transport</keyword>
<keyword id="KW-0472">Membrane</keyword>
<keyword id="KW-0496">Mitochondrion</keyword>
<keyword id="KW-0999">Mitochondrion inner membrane</keyword>
<keyword id="KW-1185">Reference proteome</keyword>
<keyword id="KW-0679">Respiratory chain</keyword>
<keyword id="KW-0812">Transmembrane</keyword>
<keyword id="KW-1133">Transmembrane helix</keyword>
<keyword id="KW-0813">Transport</keyword>
<keyword id="KW-0830">Ubiquinone</keyword>